<name>CNO10_DROME</name>
<dbReference type="EMBL" id="AE014297">
    <property type="protein sequence ID" value="AAF54839.1"/>
    <property type="molecule type" value="Genomic_DNA"/>
</dbReference>
<dbReference type="EMBL" id="AY070614">
    <property type="protein sequence ID" value="AAL48085.1"/>
    <property type="status" value="ALT_FRAME"/>
    <property type="molecule type" value="mRNA"/>
</dbReference>
<dbReference type="RefSeq" id="NP_001303491.1">
    <property type="nucleotide sequence ID" value="NM_001316562.1"/>
</dbReference>
<dbReference type="RefSeq" id="NP_650215.1">
    <property type="nucleotide sequence ID" value="NM_141958.4"/>
</dbReference>
<dbReference type="SMR" id="Q9V3G6"/>
<dbReference type="BioGRID" id="66647">
    <property type="interactions" value="19"/>
</dbReference>
<dbReference type="ComplexPortal" id="CPX-2771">
    <property type="entry name" value="CCR4-NOT mRNA deadenylase complex"/>
</dbReference>
<dbReference type="FunCoup" id="Q9V3G6">
    <property type="interactions" value="823"/>
</dbReference>
<dbReference type="IntAct" id="Q9V3G6">
    <property type="interactions" value="1"/>
</dbReference>
<dbReference type="STRING" id="7227.FBpp0401462"/>
<dbReference type="GlyGen" id="Q9V3G6">
    <property type="glycosylation" value="1 site"/>
</dbReference>
<dbReference type="iPTMnet" id="Q9V3G6"/>
<dbReference type="PaxDb" id="7227-FBpp0082112"/>
<dbReference type="EnsemblMetazoa" id="FBtr0082643">
    <property type="protein sequence ID" value="FBpp0082112"/>
    <property type="gene ID" value="FBgn0260444"/>
</dbReference>
<dbReference type="EnsemblMetazoa" id="FBtr0445304">
    <property type="protein sequence ID" value="FBpp0401462"/>
    <property type="gene ID" value="FBgn0260444"/>
</dbReference>
<dbReference type="GeneID" id="41552"/>
<dbReference type="KEGG" id="dme:Dmel_CG18616"/>
<dbReference type="UCSC" id="CG18616-RA">
    <property type="organism name" value="d. melanogaster"/>
</dbReference>
<dbReference type="AGR" id="FB:FBgn0260444"/>
<dbReference type="CTD" id="41552"/>
<dbReference type="FlyBase" id="FBgn0260444">
    <property type="gene designation" value="Not10"/>
</dbReference>
<dbReference type="VEuPathDB" id="VectorBase:FBgn0260444"/>
<dbReference type="eggNOG" id="KOG2471">
    <property type="taxonomic scope" value="Eukaryota"/>
</dbReference>
<dbReference type="GeneTree" id="ENSGT00390000001827"/>
<dbReference type="HOGENOM" id="CLU_013100_2_0_1"/>
<dbReference type="InParanoid" id="Q9V3G6"/>
<dbReference type="OMA" id="RAVVNFY"/>
<dbReference type="OrthoDB" id="25157at2759"/>
<dbReference type="PhylomeDB" id="Q9V3G6"/>
<dbReference type="SignaLink" id="Q9V3G6"/>
<dbReference type="BioGRID-ORCS" id="41552">
    <property type="hits" value="0 hits in 1 CRISPR screen"/>
</dbReference>
<dbReference type="GenomeRNAi" id="41552"/>
<dbReference type="PRO" id="PR:Q9V3G6"/>
<dbReference type="Proteomes" id="UP000000803">
    <property type="component" value="Chromosome 3R"/>
</dbReference>
<dbReference type="Bgee" id="FBgn0260444">
    <property type="expression patterns" value="Expressed in embryonic/larval hemocyte (Drosophila) and 69 other cell types or tissues"/>
</dbReference>
<dbReference type="ExpressionAtlas" id="Q9V3G6">
    <property type="expression patterns" value="baseline and differential"/>
</dbReference>
<dbReference type="GO" id="GO:0030014">
    <property type="term" value="C:CCR4-NOT complex"/>
    <property type="evidence" value="ECO:0000314"/>
    <property type="project" value="FlyBase"/>
</dbReference>
<dbReference type="GO" id="GO:0005737">
    <property type="term" value="C:cytoplasm"/>
    <property type="evidence" value="ECO:0007669"/>
    <property type="project" value="UniProtKB-SubCell"/>
</dbReference>
<dbReference type="GO" id="GO:0005634">
    <property type="term" value="C:nucleus"/>
    <property type="evidence" value="ECO:0007669"/>
    <property type="project" value="UniProtKB-SubCell"/>
</dbReference>
<dbReference type="GO" id="GO:0006402">
    <property type="term" value="P:mRNA catabolic process"/>
    <property type="evidence" value="ECO:0000314"/>
    <property type="project" value="FlyBase"/>
</dbReference>
<dbReference type="GO" id="GO:0017148">
    <property type="term" value="P:negative regulation of translation"/>
    <property type="evidence" value="ECO:0000314"/>
    <property type="project" value="FlyBase"/>
</dbReference>
<dbReference type="GO" id="GO:0031047">
    <property type="term" value="P:regulatory ncRNA-mediated gene silencing"/>
    <property type="evidence" value="ECO:0007669"/>
    <property type="project" value="UniProtKB-KW"/>
</dbReference>
<dbReference type="Gene3D" id="1.25.40.10">
    <property type="entry name" value="Tetratricopeptide repeat domain"/>
    <property type="match status" value="1"/>
</dbReference>
<dbReference type="InterPro" id="IPR039740">
    <property type="entry name" value="CNOT10"/>
</dbReference>
<dbReference type="InterPro" id="IPR011990">
    <property type="entry name" value="TPR-like_helical_dom_sf"/>
</dbReference>
<dbReference type="PANTHER" id="PTHR12979">
    <property type="entry name" value="CCR4-NOT TRANSCRIPTION COMPLEX SUBUNIT 10"/>
    <property type="match status" value="1"/>
</dbReference>
<dbReference type="PANTHER" id="PTHR12979:SF5">
    <property type="entry name" value="CCR4-NOT TRANSCRIPTION COMPLEX SUBUNIT 10"/>
    <property type="match status" value="1"/>
</dbReference>
<dbReference type="SUPFAM" id="SSF48452">
    <property type="entry name" value="TPR-like"/>
    <property type="match status" value="1"/>
</dbReference>
<protein>
    <recommendedName>
        <fullName>CCR4-NOT transcription complex subunit 10</fullName>
        <shortName>CNOT10</shortName>
    </recommendedName>
</protein>
<accession>Q9V3G6</accession>
<accession>Q8SZP3</accession>
<proteinExistence type="evidence at protein level"/>
<comment type="function">
    <text evidence="1">Component of the CCR4-NOT complex which is one of the major cellular mRNA deadenylases and is linked to various cellular processes including bulk mRNA degradation, miRNA-mediated repression, translational repression during translational initiation and general transcription regulation. Additional complex functions may be a consequence of its influence on mRNA expression. Is not required for association of CNOT7 to the CCR4-NOT complex (By similarity).</text>
</comment>
<comment type="subunit">
    <text evidence="5 6">Component of the CCR4-NOT complex. CNOT10 and CNOT11 form a subcomplex docked to the CNOT1 scaffold.</text>
</comment>
<comment type="subcellular location">
    <subcellularLocation>
        <location evidence="1">Cytoplasm</location>
    </subcellularLocation>
    <subcellularLocation>
        <location evidence="1">Nucleus</location>
    </subcellularLocation>
</comment>
<comment type="similarity">
    <text evidence="7">Belongs to the CNOT10 family.</text>
</comment>
<comment type="sequence caution" evidence="7">
    <conflict type="frameshift">
        <sequence resource="EMBL-CDS" id="AAL48085"/>
    </conflict>
</comment>
<reference key="1">
    <citation type="journal article" date="2000" name="Science">
        <title>The genome sequence of Drosophila melanogaster.</title>
        <authorList>
            <person name="Adams M.D."/>
            <person name="Celniker S.E."/>
            <person name="Holt R.A."/>
            <person name="Evans C.A."/>
            <person name="Gocayne J.D."/>
            <person name="Amanatides P.G."/>
            <person name="Scherer S.E."/>
            <person name="Li P.W."/>
            <person name="Hoskins R.A."/>
            <person name="Galle R.F."/>
            <person name="George R.A."/>
            <person name="Lewis S.E."/>
            <person name="Richards S."/>
            <person name="Ashburner M."/>
            <person name="Henderson S.N."/>
            <person name="Sutton G.G."/>
            <person name="Wortman J.R."/>
            <person name="Yandell M.D."/>
            <person name="Zhang Q."/>
            <person name="Chen L.X."/>
            <person name="Brandon R.C."/>
            <person name="Rogers Y.-H.C."/>
            <person name="Blazej R.G."/>
            <person name="Champe M."/>
            <person name="Pfeiffer B.D."/>
            <person name="Wan K.H."/>
            <person name="Doyle C."/>
            <person name="Baxter E.G."/>
            <person name="Helt G."/>
            <person name="Nelson C.R."/>
            <person name="Miklos G.L.G."/>
            <person name="Abril J.F."/>
            <person name="Agbayani A."/>
            <person name="An H.-J."/>
            <person name="Andrews-Pfannkoch C."/>
            <person name="Baldwin D."/>
            <person name="Ballew R.M."/>
            <person name="Basu A."/>
            <person name="Baxendale J."/>
            <person name="Bayraktaroglu L."/>
            <person name="Beasley E.M."/>
            <person name="Beeson K.Y."/>
            <person name="Benos P.V."/>
            <person name="Berman B.P."/>
            <person name="Bhandari D."/>
            <person name="Bolshakov S."/>
            <person name="Borkova D."/>
            <person name="Botchan M.R."/>
            <person name="Bouck J."/>
            <person name="Brokstein P."/>
            <person name="Brottier P."/>
            <person name="Burtis K.C."/>
            <person name="Busam D.A."/>
            <person name="Butler H."/>
            <person name="Cadieu E."/>
            <person name="Center A."/>
            <person name="Chandra I."/>
            <person name="Cherry J.M."/>
            <person name="Cawley S."/>
            <person name="Dahlke C."/>
            <person name="Davenport L.B."/>
            <person name="Davies P."/>
            <person name="de Pablos B."/>
            <person name="Delcher A."/>
            <person name="Deng Z."/>
            <person name="Mays A.D."/>
            <person name="Dew I."/>
            <person name="Dietz S.M."/>
            <person name="Dodson K."/>
            <person name="Doup L.E."/>
            <person name="Downes M."/>
            <person name="Dugan-Rocha S."/>
            <person name="Dunkov B.C."/>
            <person name="Dunn P."/>
            <person name="Durbin K.J."/>
            <person name="Evangelista C.C."/>
            <person name="Ferraz C."/>
            <person name="Ferriera S."/>
            <person name="Fleischmann W."/>
            <person name="Fosler C."/>
            <person name="Gabrielian A.E."/>
            <person name="Garg N.S."/>
            <person name="Gelbart W.M."/>
            <person name="Glasser K."/>
            <person name="Glodek A."/>
            <person name="Gong F."/>
            <person name="Gorrell J.H."/>
            <person name="Gu Z."/>
            <person name="Guan P."/>
            <person name="Harris M."/>
            <person name="Harris N.L."/>
            <person name="Harvey D.A."/>
            <person name="Heiman T.J."/>
            <person name="Hernandez J.R."/>
            <person name="Houck J."/>
            <person name="Hostin D."/>
            <person name="Houston K.A."/>
            <person name="Howland T.J."/>
            <person name="Wei M.-H."/>
            <person name="Ibegwam C."/>
            <person name="Jalali M."/>
            <person name="Kalush F."/>
            <person name="Karpen G.H."/>
            <person name="Ke Z."/>
            <person name="Kennison J.A."/>
            <person name="Ketchum K.A."/>
            <person name="Kimmel B.E."/>
            <person name="Kodira C.D."/>
            <person name="Kraft C.L."/>
            <person name="Kravitz S."/>
            <person name="Kulp D."/>
            <person name="Lai Z."/>
            <person name="Lasko P."/>
            <person name="Lei Y."/>
            <person name="Levitsky A.A."/>
            <person name="Li J.H."/>
            <person name="Li Z."/>
            <person name="Liang Y."/>
            <person name="Lin X."/>
            <person name="Liu X."/>
            <person name="Mattei B."/>
            <person name="McIntosh T.C."/>
            <person name="McLeod M.P."/>
            <person name="McPherson D."/>
            <person name="Merkulov G."/>
            <person name="Milshina N.V."/>
            <person name="Mobarry C."/>
            <person name="Morris J."/>
            <person name="Moshrefi A."/>
            <person name="Mount S.M."/>
            <person name="Moy M."/>
            <person name="Murphy B."/>
            <person name="Murphy L."/>
            <person name="Muzny D.M."/>
            <person name="Nelson D.L."/>
            <person name="Nelson D.R."/>
            <person name="Nelson K.A."/>
            <person name="Nixon K."/>
            <person name="Nusskern D.R."/>
            <person name="Pacleb J.M."/>
            <person name="Palazzolo M."/>
            <person name="Pittman G.S."/>
            <person name="Pan S."/>
            <person name="Pollard J."/>
            <person name="Puri V."/>
            <person name="Reese M.G."/>
            <person name="Reinert K."/>
            <person name="Remington K."/>
            <person name="Saunders R.D.C."/>
            <person name="Scheeler F."/>
            <person name="Shen H."/>
            <person name="Shue B.C."/>
            <person name="Siden-Kiamos I."/>
            <person name="Simpson M."/>
            <person name="Skupski M.P."/>
            <person name="Smith T.J."/>
            <person name="Spier E."/>
            <person name="Spradling A.C."/>
            <person name="Stapleton M."/>
            <person name="Strong R."/>
            <person name="Sun E."/>
            <person name="Svirskas R."/>
            <person name="Tector C."/>
            <person name="Turner R."/>
            <person name="Venter E."/>
            <person name="Wang A.H."/>
            <person name="Wang X."/>
            <person name="Wang Z.-Y."/>
            <person name="Wassarman D.A."/>
            <person name="Weinstock G.M."/>
            <person name="Weissenbach J."/>
            <person name="Williams S.M."/>
            <person name="Woodage T."/>
            <person name="Worley K.C."/>
            <person name="Wu D."/>
            <person name="Yang S."/>
            <person name="Yao Q.A."/>
            <person name="Ye J."/>
            <person name="Yeh R.-F."/>
            <person name="Zaveri J.S."/>
            <person name="Zhan M."/>
            <person name="Zhang G."/>
            <person name="Zhao Q."/>
            <person name="Zheng L."/>
            <person name="Zheng X.H."/>
            <person name="Zhong F.N."/>
            <person name="Zhong W."/>
            <person name="Zhou X."/>
            <person name="Zhu S.C."/>
            <person name="Zhu X."/>
            <person name="Smith H.O."/>
            <person name="Gibbs R.A."/>
            <person name="Myers E.W."/>
            <person name="Rubin G.M."/>
            <person name="Venter J.C."/>
        </authorList>
    </citation>
    <scope>NUCLEOTIDE SEQUENCE [LARGE SCALE GENOMIC DNA]</scope>
    <source>
        <strain>Berkeley</strain>
    </source>
</reference>
<reference key="2">
    <citation type="journal article" date="2002" name="Genome Biol.">
        <title>Annotation of the Drosophila melanogaster euchromatic genome: a systematic review.</title>
        <authorList>
            <person name="Misra S."/>
            <person name="Crosby M.A."/>
            <person name="Mungall C.J."/>
            <person name="Matthews B.B."/>
            <person name="Campbell K.S."/>
            <person name="Hradecky P."/>
            <person name="Huang Y."/>
            <person name="Kaminker J.S."/>
            <person name="Millburn G.H."/>
            <person name="Prochnik S.E."/>
            <person name="Smith C.D."/>
            <person name="Tupy J.L."/>
            <person name="Whitfield E.J."/>
            <person name="Bayraktaroglu L."/>
            <person name="Berman B.P."/>
            <person name="Bettencourt B.R."/>
            <person name="Celniker S.E."/>
            <person name="de Grey A.D.N.J."/>
            <person name="Drysdale R.A."/>
            <person name="Harris N.L."/>
            <person name="Richter J."/>
            <person name="Russo S."/>
            <person name="Schroeder A.J."/>
            <person name="Shu S.Q."/>
            <person name="Stapleton M."/>
            <person name="Yamada C."/>
            <person name="Ashburner M."/>
            <person name="Gelbart W.M."/>
            <person name="Rubin G.M."/>
            <person name="Lewis S.E."/>
        </authorList>
    </citation>
    <scope>GENOME REANNOTATION</scope>
    <source>
        <strain>Berkeley</strain>
    </source>
</reference>
<reference key="3">
    <citation type="journal article" date="2002" name="Genome Biol.">
        <title>A Drosophila full-length cDNA resource.</title>
        <authorList>
            <person name="Stapleton M."/>
            <person name="Carlson J.W."/>
            <person name="Brokstein P."/>
            <person name="Yu C."/>
            <person name="Champe M."/>
            <person name="George R.A."/>
            <person name="Guarin H."/>
            <person name="Kronmiller B."/>
            <person name="Pacleb J.M."/>
            <person name="Park S."/>
            <person name="Wan K.H."/>
            <person name="Rubin G.M."/>
            <person name="Celniker S.E."/>
        </authorList>
    </citation>
    <scope>NUCLEOTIDE SEQUENCE [LARGE SCALE MRNA]</scope>
    <source>
        <strain>Berkeley</strain>
        <tissue>Embryo</tissue>
    </source>
</reference>
<reference key="4">
    <citation type="journal article" date="2007" name="Mol. Biosyst.">
        <title>An integrated chemical, mass spectrometric and computational strategy for (quantitative) phosphoproteomics: application to Drosophila melanogaster Kc167 cells.</title>
        <authorList>
            <person name="Bodenmiller B."/>
            <person name="Mueller L.N."/>
            <person name="Pedrioli P.G.A."/>
            <person name="Pflieger D."/>
            <person name="Juenger M.A."/>
            <person name="Eng J.K."/>
            <person name="Aebersold R."/>
            <person name="Tao W.A."/>
        </authorList>
    </citation>
    <scope>PHOSPHORYLATION [LARGE SCALE ANALYSIS] AT THR-45</scope>
    <scope>IDENTIFICATION BY MASS SPECTROMETRY</scope>
</reference>
<reference key="5">
    <citation type="journal article" date="2010" name="RNA">
        <title>Subunits of the Drosophila CCR4-NOT complex and their roles in mRNA deadenylation.</title>
        <authorList>
            <person name="Temme C."/>
            <person name="Zhang L."/>
            <person name="Kremmer E."/>
            <person name="Ihling C."/>
            <person name="Chartier A."/>
            <person name="Sinz A."/>
            <person name="Simonelig M."/>
            <person name="Wahle E."/>
        </authorList>
    </citation>
    <scope>IDENTIFICATION IN THE CCR4-NOT COMPLEX</scope>
</reference>
<reference key="6">
    <citation type="journal article" date="2013" name="RNA Biol.">
        <title>NOT10 and C2orf29/NOT11 form a conserved module of the CCR4-NOT complex that docks onto the NOT1 N-terminal domain.</title>
        <authorList>
            <person name="Bawankar P."/>
            <person name="Loh B."/>
            <person name="Wohlbold L."/>
            <person name="Schmidt S."/>
            <person name="Izaurralde E."/>
        </authorList>
    </citation>
    <scope>IDENTIFICATION IN THE CCR4-NOT COMPLEX</scope>
</reference>
<feature type="chain" id="PRO_0000372844" description="CCR4-NOT transcription complex subunit 10">
    <location>
        <begin position="1"/>
        <end position="635"/>
    </location>
</feature>
<feature type="region of interest" description="Disordered" evidence="3">
    <location>
        <begin position="396"/>
        <end position="416"/>
    </location>
</feature>
<feature type="region of interest" description="Disordered" evidence="3">
    <location>
        <begin position="450"/>
        <end position="474"/>
    </location>
</feature>
<feature type="coiled-coil region" evidence="2">
    <location>
        <begin position="131"/>
        <end position="165"/>
    </location>
</feature>
<feature type="compositionally biased region" description="Basic and acidic residues" evidence="3">
    <location>
        <begin position="456"/>
        <end position="470"/>
    </location>
</feature>
<feature type="modified residue" description="Phosphothreonine" evidence="4">
    <location>
        <position position="45"/>
    </location>
</feature>
<feature type="sequence conflict" description="In Ref. 3; AAL48085." evidence="7" ref="3">
    <original>L</original>
    <variation>F</variation>
    <location>
        <position position="347"/>
    </location>
</feature>
<evidence type="ECO:0000250" key="1"/>
<evidence type="ECO:0000255" key="2"/>
<evidence type="ECO:0000256" key="3">
    <source>
        <dbReference type="SAM" id="MobiDB-lite"/>
    </source>
</evidence>
<evidence type="ECO:0000269" key="4">
    <source>
    </source>
</evidence>
<evidence type="ECO:0000269" key="5">
    <source>
    </source>
</evidence>
<evidence type="ECO:0000269" key="6">
    <source>
    </source>
</evidence>
<evidence type="ECO:0000305" key="7"/>
<gene>
    <name type="primary">Not10</name>
    <name type="ORF">CG18616</name>
</gene>
<keyword id="KW-0175">Coiled coil</keyword>
<keyword id="KW-0963">Cytoplasm</keyword>
<keyword id="KW-0539">Nucleus</keyword>
<keyword id="KW-0597">Phosphoprotein</keyword>
<keyword id="KW-1185">Reference proteome</keyword>
<keyword id="KW-0943">RNA-mediated gene silencing</keyword>
<keyword id="KW-0804">Transcription</keyword>
<keyword id="KW-0805">Transcription regulation</keyword>
<keyword id="KW-0810">Translation regulation</keyword>
<sequence length="635" mass="69693">MDSAESPTKTQAGEDENYSLLCQAHEQFNNSEFDRCLELLQELETRGESSGPVLRHNRAVVSYYKTGCTQHSVLLKELEALTADADAPGDVSSGLSLKQGAAAATVARYNRAVIYYHRHMFGTALEKLAPLVARLEALEKAMAALVATLQLQLLLATNQLNRAEAFLDYLQYKLNLVATAPSSNAAEEAAVVGTAPPSAATNSSVVASPGGAAVEGAVPGLGGSLQLLQLITLVLNRKPVVIQEDGTPEYAALKAQQYYIMKDFQMAAKQLMRINNECTQAGTITPQLSTCIANNMGVIHLRVRHYAIAAKFFQNALNFDQQLARNLRQSTLQTMSSARSCEILYNLGVAMLHLRRPKEAFQCFLVPVKQFHSNPRLWLRMAEACIMEHEAKLVEEERQSQSETPSTKPYAPQSAGVPEPTLEFAVLCLRSALTLTQHYKTRFHMAAVSSEDVEAPEPKDPTQESWRHPQDNNFCNPSKPVSLESLENMMAAIYAAHSFVSLRLGDHVTALEMSEKLLACERLSDAHKLLGHMYAGEALMLMDKASEARDHLDPTFVGTLNAFDFETRDWQLKSVDAAQNVVRYNLAVAMALQNDLPQAKALLANLTHSLVANKALALRRFMDLKMGPVPGGTPS</sequence>
<organism>
    <name type="scientific">Drosophila melanogaster</name>
    <name type="common">Fruit fly</name>
    <dbReference type="NCBI Taxonomy" id="7227"/>
    <lineage>
        <taxon>Eukaryota</taxon>
        <taxon>Metazoa</taxon>
        <taxon>Ecdysozoa</taxon>
        <taxon>Arthropoda</taxon>
        <taxon>Hexapoda</taxon>
        <taxon>Insecta</taxon>
        <taxon>Pterygota</taxon>
        <taxon>Neoptera</taxon>
        <taxon>Endopterygota</taxon>
        <taxon>Diptera</taxon>
        <taxon>Brachycera</taxon>
        <taxon>Muscomorpha</taxon>
        <taxon>Ephydroidea</taxon>
        <taxon>Drosophilidae</taxon>
        <taxon>Drosophila</taxon>
        <taxon>Sophophora</taxon>
    </lineage>
</organism>